<reference key="1">
    <citation type="journal article" date="2000" name="Oncogene">
        <title>Evidence for an interaction between the insulin receptor and Grb7. A role for two of its binding domains, PIR and SH2.</title>
        <authorList>
            <person name="Kasus-Jacobi A."/>
            <person name="Bereziat V."/>
            <person name="Perdereau D."/>
            <person name="Girard J."/>
            <person name="Burnol A.F."/>
        </authorList>
    </citation>
    <scope>NUCLEOTIDE SEQUENCE [MRNA]</scope>
    <scope>INTERACTION WITH INSR; EGFR; FGFR1 AND RET</scope>
    <scope>MUTAGENESIS OF ARG-461</scope>
    <scope>TISSUE SPECIFICITY</scope>
    <source>
        <tissue>Liver</tissue>
    </source>
</reference>
<reference key="2">
    <citation type="submission" date="2005-07" db="EMBL/GenBank/DDBJ databases">
        <authorList>
            <person name="Mural R.J."/>
            <person name="Adams M.D."/>
            <person name="Myers E.W."/>
            <person name="Smith H.O."/>
            <person name="Venter J.C."/>
        </authorList>
    </citation>
    <scope>NUCLEOTIDE SEQUENCE [LARGE SCALE GENOMIC DNA]</scope>
    <source>
        <strain>Brown Norway</strain>
    </source>
</reference>
<reference key="3">
    <citation type="journal article" date="2004" name="Genome Res.">
        <title>The status, quality, and expansion of the NIH full-length cDNA project: the Mammalian Gene Collection (MGC).</title>
        <authorList>
            <consortium name="The MGC Project Team"/>
        </authorList>
    </citation>
    <scope>NUCLEOTIDE SEQUENCE [LARGE SCALE MRNA]</scope>
    <source>
        <tissue>Kidney</tissue>
    </source>
</reference>
<reference key="4">
    <citation type="journal article" date="2012" name="Nat. Commun.">
        <title>Quantitative maps of protein phosphorylation sites across 14 different rat organs and tissues.</title>
        <authorList>
            <person name="Lundby A."/>
            <person name="Secher A."/>
            <person name="Lage K."/>
            <person name="Nordsborg N.B."/>
            <person name="Dmytriyev A."/>
            <person name="Lundby C."/>
            <person name="Olsen J.V."/>
        </authorList>
    </citation>
    <scope>PHOSPHORYLATION [LARGE SCALE ANALYSIS] AT SER-364</scope>
    <scope>IDENTIFICATION BY MASS SPECTROMETRY [LARGE SCALE ANALYSIS]</scope>
</reference>
<organism>
    <name type="scientific">Rattus norvegicus</name>
    <name type="common">Rat</name>
    <dbReference type="NCBI Taxonomy" id="10116"/>
    <lineage>
        <taxon>Eukaryota</taxon>
        <taxon>Metazoa</taxon>
        <taxon>Chordata</taxon>
        <taxon>Craniata</taxon>
        <taxon>Vertebrata</taxon>
        <taxon>Euteleostomi</taxon>
        <taxon>Mammalia</taxon>
        <taxon>Eutheria</taxon>
        <taxon>Euarchontoglires</taxon>
        <taxon>Glires</taxon>
        <taxon>Rodentia</taxon>
        <taxon>Myomorpha</taxon>
        <taxon>Muroidea</taxon>
        <taxon>Muridae</taxon>
        <taxon>Murinae</taxon>
        <taxon>Rattus</taxon>
    </lineage>
</organism>
<feature type="chain" id="PRO_0000412210" description="Growth factor receptor-bound protein 7">
    <location>
        <begin position="1"/>
        <end position="535"/>
    </location>
</feature>
<feature type="domain" description="Ras-associating" evidence="5">
    <location>
        <begin position="99"/>
        <end position="185"/>
    </location>
</feature>
<feature type="domain" description="PH" evidence="4">
    <location>
        <begin position="228"/>
        <end position="341"/>
    </location>
</feature>
<feature type="domain" description="SH2" evidence="6">
    <location>
        <begin position="434"/>
        <end position="530"/>
    </location>
</feature>
<feature type="region of interest" description="Disordered" evidence="7">
    <location>
        <begin position="1"/>
        <end position="89"/>
    </location>
</feature>
<feature type="compositionally biased region" description="Low complexity" evidence="7">
    <location>
        <begin position="1"/>
        <end position="20"/>
    </location>
</feature>
<feature type="compositionally biased region" description="Pro residues" evidence="7">
    <location>
        <begin position="21"/>
        <end position="37"/>
    </location>
</feature>
<feature type="site" description="Important for lipid binding and for stimulation of cell migration" evidence="1">
    <location>
        <position position="238"/>
    </location>
</feature>
<feature type="site" description="Important for dimerization and for HRAS activation" evidence="1">
    <location>
        <position position="514"/>
    </location>
</feature>
<feature type="modified residue" description="Phosphotyrosine; by FAK1" evidence="3">
    <location>
        <position position="187"/>
    </location>
</feature>
<feature type="modified residue" description="Phosphotyrosine; by FAK1" evidence="3">
    <location>
        <position position="341"/>
    </location>
</feature>
<feature type="modified residue" description="Phosphoserine" evidence="10">
    <location>
        <position position="364"/>
    </location>
</feature>
<feature type="mutagenesis site" description="Reduces interaction with INSR." evidence="8">
    <original>R</original>
    <variation>K</variation>
    <location>
        <position position="461"/>
    </location>
</feature>
<dbReference type="EMBL" id="AF190121">
    <property type="protein sequence ID" value="AAF01776.1"/>
    <property type="molecule type" value="mRNA"/>
</dbReference>
<dbReference type="EMBL" id="CH473948">
    <property type="protein sequence ID" value="EDM05933.1"/>
    <property type="molecule type" value="Genomic_DNA"/>
</dbReference>
<dbReference type="EMBL" id="BC081757">
    <property type="protein sequence ID" value="AAH81757.1"/>
    <property type="molecule type" value="mRNA"/>
</dbReference>
<dbReference type="RefSeq" id="NP_445855.1">
    <property type="nucleotide sequence ID" value="NM_053403.2"/>
</dbReference>
<dbReference type="RefSeq" id="XP_006247494.1">
    <property type="nucleotide sequence ID" value="XM_006247432.3"/>
</dbReference>
<dbReference type="RefSeq" id="XP_006247495.1">
    <property type="nucleotide sequence ID" value="XM_006247433.5"/>
</dbReference>
<dbReference type="RefSeq" id="XP_008766347.1">
    <property type="nucleotide sequence ID" value="XM_008768125.1"/>
</dbReference>
<dbReference type="RefSeq" id="XP_017453048.1">
    <property type="nucleotide sequence ID" value="XM_017597559.1"/>
</dbReference>
<dbReference type="RefSeq" id="XP_017453049.1">
    <property type="nucleotide sequence ID" value="XM_017597560.1"/>
</dbReference>
<dbReference type="RefSeq" id="XP_017453050.1">
    <property type="nucleotide sequence ID" value="XM_017597561.1"/>
</dbReference>
<dbReference type="RefSeq" id="XP_038942897.1">
    <property type="nucleotide sequence ID" value="XM_039086969.2"/>
</dbReference>
<dbReference type="RefSeq" id="XP_063126061.1">
    <property type="nucleotide sequence ID" value="XM_063269991.1"/>
</dbReference>
<dbReference type="SMR" id="Q9QZC5"/>
<dbReference type="BioGRID" id="249963">
    <property type="interactions" value="8"/>
</dbReference>
<dbReference type="FunCoup" id="Q9QZC5">
    <property type="interactions" value="455"/>
</dbReference>
<dbReference type="IntAct" id="Q9QZC5">
    <property type="interactions" value="38"/>
</dbReference>
<dbReference type="STRING" id="10116.ENSRNOP00000009299"/>
<dbReference type="GlyGen" id="Q9QZC5">
    <property type="glycosylation" value="1 site"/>
</dbReference>
<dbReference type="iPTMnet" id="Q9QZC5"/>
<dbReference type="PhosphoSitePlus" id="Q9QZC5"/>
<dbReference type="jPOST" id="Q9QZC5"/>
<dbReference type="PaxDb" id="10116-ENSRNOP00000009299"/>
<dbReference type="GeneID" id="84427"/>
<dbReference type="KEGG" id="rno:84427"/>
<dbReference type="UCSC" id="RGD:619759">
    <property type="organism name" value="rat"/>
</dbReference>
<dbReference type="AGR" id="RGD:619759"/>
<dbReference type="CTD" id="2886"/>
<dbReference type="RGD" id="619759">
    <property type="gene designation" value="Grb7"/>
</dbReference>
<dbReference type="VEuPathDB" id="HostDB:ENSRNOG00000006990"/>
<dbReference type="eggNOG" id="KOG3751">
    <property type="taxonomic scope" value="Eukaryota"/>
</dbReference>
<dbReference type="HOGENOM" id="CLU_023207_0_1_1"/>
<dbReference type="InParanoid" id="Q9QZC5"/>
<dbReference type="OrthoDB" id="5977126at2759"/>
<dbReference type="PhylomeDB" id="Q9QZC5"/>
<dbReference type="TreeFam" id="TF317511"/>
<dbReference type="Reactome" id="R-RNO-1306955">
    <property type="pathway name" value="GRB7 events in ERBB2 signaling"/>
</dbReference>
<dbReference type="Reactome" id="R-RNO-1433557">
    <property type="pathway name" value="Signaling by SCF-KIT"/>
</dbReference>
<dbReference type="Reactome" id="R-RNO-186763">
    <property type="pathway name" value="Downstream signal transduction"/>
</dbReference>
<dbReference type="Reactome" id="R-RNO-210993">
    <property type="pathway name" value="Tie2 Signaling"/>
</dbReference>
<dbReference type="Reactome" id="R-RNO-8853659">
    <property type="pathway name" value="RET signaling"/>
</dbReference>
<dbReference type="Reactome" id="R-RNO-9696273">
    <property type="pathway name" value="RND1 GTPase cycle"/>
</dbReference>
<dbReference type="PRO" id="PR:Q9QZC5"/>
<dbReference type="Proteomes" id="UP000002494">
    <property type="component" value="Chromosome 10"/>
</dbReference>
<dbReference type="Proteomes" id="UP000234681">
    <property type="component" value="Chromosome 10"/>
</dbReference>
<dbReference type="Bgee" id="ENSRNOG00000006990">
    <property type="expression patterns" value="Expressed in jejunum and 13 other cell types or tissues"/>
</dbReference>
<dbReference type="GO" id="GO:0042995">
    <property type="term" value="C:cell projection"/>
    <property type="evidence" value="ECO:0007669"/>
    <property type="project" value="UniProtKB-SubCell"/>
</dbReference>
<dbReference type="GO" id="GO:0010494">
    <property type="term" value="C:cytoplasmic stress granule"/>
    <property type="evidence" value="ECO:0000250"/>
    <property type="project" value="UniProtKB"/>
</dbReference>
<dbReference type="GO" id="GO:0005829">
    <property type="term" value="C:cytosol"/>
    <property type="evidence" value="ECO:0000250"/>
    <property type="project" value="UniProtKB"/>
</dbReference>
<dbReference type="GO" id="GO:0005925">
    <property type="term" value="C:focal adhesion"/>
    <property type="evidence" value="ECO:0000250"/>
    <property type="project" value="UniProtKB"/>
</dbReference>
<dbReference type="GO" id="GO:0005886">
    <property type="term" value="C:plasma membrane"/>
    <property type="evidence" value="ECO:0007669"/>
    <property type="project" value="UniProtKB-SubCell"/>
</dbReference>
<dbReference type="GO" id="GO:0042802">
    <property type="term" value="F:identical protein binding"/>
    <property type="evidence" value="ECO:0000266"/>
    <property type="project" value="RGD"/>
</dbReference>
<dbReference type="GO" id="GO:0035091">
    <property type="term" value="F:phosphatidylinositol binding"/>
    <property type="evidence" value="ECO:0000250"/>
    <property type="project" value="UniProtKB"/>
</dbReference>
<dbReference type="GO" id="GO:0019901">
    <property type="term" value="F:protein kinase binding"/>
    <property type="evidence" value="ECO:0000266"/>
    <property type="project" value="RGD"/>
</dbReference>
<dbReference type="GO" id="GO:0003723">
    <property type="term" value="F:RNA binding"/>
    <property type="evidence" value="ECO:0007669"/>
    <property type="project" value="UniProtKB-KW"/>
</dbReference>
<dbReference type="GO" id="GO:0017148">
    <property type="term" value="P:negative regulation of translation"/>
    <property type="evidence" value="ECO:0000250"/>
    <property type="project" value="UniProtKB"/>
</dbReference>
<dbReference type="GO" id="GO:0030335">
    <property type="term" value="P:positive regulation of cell migration"/>
    <property type="evidence" value="ECO:0000250"/>
    <property type="project" value="UniProtKB"/>
</dbReference>
<dbReference type="GO" id="GO:0007165">
    <property type="term" value="P:signal transduction"/>
    <property type="evidence" value="ECO:0007669"/>
    <property type="project" value="InterPro"/>
</dbReference>
<dbReference type="GO" id="GO:0034063">
    <property type="term" value="P:stress granule assembly"/>
    <property type="evidence" value="ECO:0000250"/>
    <property type="project" value="UniProtKB"/>
</dbReference>
<dbReference type="CDD" id="cd01259">
    <property type="entry name" value="PH_APBB1IP"/>
    <property type="match status" value="1"/>
</dbReference>
<dbReference type="CDD" id="cd16140">
    <property type="entry name" value="RA_GRB7"/>
    <property type="match status" value="1"/>
</dbReference>
<dbReference type="CDD" id="cd10413">
    <property type="entry name" value="SH2_Grb7"/>
    <property type="match status" value="1"/>
</dbReference>
<dbReference type="FunFam" id="3.30.505.10:FF:000015">
    <property type="entry name" value="Growth factor receptor-bound protein 10 isoform X1"/>
    <property type="match status" value="1"/>
</dbReference>
<dbReference type="FunFam" id="2.30.29.30:FF:000062">
    <property type="entry name" value="growth factor receptor-bound protein 10 isoform X1"/>
    <property type="match status" value="1"/>
</dbReference>
<dbReference type="FunFam" id="3.10.20.90:FF:000056">
    <property type="entry name" value="growth factor receptor-bound protein 10 isoform X1"/>
    <property type="match status" value="1"/>
</dbReference>
<dbReference type="Gene3D" id="3.10.20.90">
    <property type="entry name" value="Phosphatidylinositol 3-kinase Catalytic Subunit, Chain A, domain 1"/>
    <property type="match status" value="1"/>
</dbReference>
<dbReference type="Gene3D" id="2.30.29.30">
    <property type="entry name" value="Pleckstrin-homology domain (PH domain)/Phosphotyrosine-binding domain (PTB)"/>
    <property type="match status" value="1"/>
</dbReference>
<dbReference type="Gene3D" id="3.30.505.10">
    <property type="entry name" value="SH2 domain"/>
    <property type="match status" value="1"/>
</dbReference>
<dbReference type="InterPro" id="IPR015042">
    <property type="entry name" value="BPS-dom"/>
</dbReference>
<dbReference type="InterPro" id="IPR039664">
    <property type="entry name" value="GRB/APBB1IP"/>
</dbReference>
<dbReference type="InterPro" id="IPR046986">
    <property type="entry name" value="GRB7_RA"/>
</dbReference>
<dbReference type="InterPro" id="IPR035032">
    <property type="entry name" value="Grb7_SH2"/>
</dbReference>
<dbReference type="InterPro" id="IPR011993">
    <property type="entry name" value="PH-like_dom_sf"/>
</dbReference>
<dbReference type="InterPro" id="IPR039665">
    <property type="entry name" value="PH_APBB1IP"/>
</dbReference>
<dbReference type="InterPro" id="IPR001849">
    <property type="entry name" value="PH_domain"/>
</dbReference>
<dbReference type="InterPro" id="IPR000159">
    <property type="entry name" value="RA_dom"/>
</dbReference>
<dbReference type="InterPro" id="IPR000980">
    <property type="entry name" value="SH2"/>
</dbReference>
<dbReference type="InterPro" id="IPR036860">
    <property type="entry name" value="SH2_dom_sf"/>
</dbReference>
<dbReference type="InterPro" id="IPR029071">
    <property type="entry name" value="Ubiquitin-like_domsf"/>
</dbReference>
<dbReference type="PANTHER" id="PTHR11243">
    <property type="entry name" value="GROWTH FACTOR RECEPTOR-BOUND PROTEIN"/>
    <property type="match status" value="1"/>
</dbReference>
<dbReference type="PANTHER" id="PTHR11243:SF25">
    <property type="entry name" value="GROWTH FACTOR RECEPTOR-BOUND PROTEIN 7"/>
    <property type="match status" value="1"/>
</dbReference>
<dbReference type="Pfam" id="PF08947">
    <property type="entry name" value="BPS"/>
    <property type="match status" value="1"/>
</dbReference>
<dbReference type="Pfam" id="PF00169">
    <property type="entry name" value="PH"/>
    <property type="match status" value="1"/>
</dbReference>
<dbReference type="Pfam" id="PF21989">
    <property type="entry name" value="RA_2"/>
    <property type="match status" value="1"/>
</dbReference>
<dbReference type="Pfam" id="PF00017">
    <property type="entry name" value="SH2"/>
    <property type="match status" value="1"/>
</dbReference>
<dbReference type="PRINTS" id="PR00401">
    <property type="entry name" value="SH2DOMAIN"/>
</dbReference>
<dbReference type="SMART" id="SM00233">
    <property type="entry name" value="PH"/>
    <property type="match status" value="1"/>
</dbReference>
<dbReference type="SMART" id="SM00314">
    <property type="entry name" value="RA"/>
    <property type="match status" value="1"/>
</dbReference>
<dbReference type="SMART" id="SM00252">
    <property type="entry name" value="SH2"/>
    <property type="match status" value="1"/>
</dbReference>
<dbReference type="SUPFAM" id="SSF50729">
    <property type="entry name" value="PH domain-like"/>
    <property type="match status" value="1"/>
</dbReference>
<dbReference type="SUPFAM" id="SSF55550">
    <property type="entry name" value="SH2 domain"/>
    <property type="match status" value="1"/>
</dbReference>
<dbReference type="SUPFAM" id="SSF54236">
    <property type="entry name" value="Ubiquitin-like"/>
    <property type="match status" value="1"/>
</dbReference>
<dbReference type="PROSITE" id="PS50003">
    <property type="entry name" value="PH_DOMAIN"/>
    <property type="match status" value="1"/>
</dbReference>
<dbReference type="PROSITE" id="PS50200">
    <property type="entry name" value="RA"/>
    <property type="match status" value="1"/>
</dbReference>
<dbReference type="PROSITE" id="PS50001">
    <property type="entry name" value="SH2"/>
    <property type="match status" value="1"/>
</dbReference>
<protein>
    <recommendedName>
        <fullName>Growth factor receptor-bound protein 7</fullName>
    </recommendedName>
    <alternativeName>
        <fullName>Epidermal growth factor receptor GRB-7</fullName>
    </alternativeName>
    <alternativeName>
        <fullName>GRB7 adapter protein</fullName>
    </alternativeName>
</protein>
<evidence type="ECO:0000250" key="1"/>
<evidence type="ECO:0000250" key="2">
    <source>
        <dbReference type="UniProtKB" id="Q03160"/>
    </source>
</evidence>
<evidence type="ECO:0000250" key="3">
    <source>
        <dbReference type="UniProtKB" id="Q14451"/>
    </source>
</evidence>
<evidence type="ECO:0000255" key="4">
    <source>
        <dbReference type="PROSITE-ProRule" id="PRU00145"/>
    </source>
</evidence>
<evidence type="ECO:0000255" key="5">
    <source>
        <dbReference type="PROSITE-ProRule" id="PRU00166"/>
    </source>
</evidence>
<evidence type="ECO:0000255" key="6">
    <source>
        <dbReference type="PROSITE-ProRule" id="PRU00191"/>
    </source>
</evidence>
<evidence type="ECO:0000256" key="7">
    <source>
        <dbReference type="SAM" id="MobiDB-lite"/>
    </source>
</evidence>
<evidence type="ECO:0000269" key="8">
    <source>
    </source>
</evidence>
<evidence type="ECO:0000305" key="9"/>
<evidence type="ECO:0007744" key="10">
    <source>
    </source>
</evidence>
<keyword id="KW-0965">Cell junction</keyword>
<keyword id="KW-1003">Cell membrane</keyword>
<keyword id="KW-0966">Cell projection</keyword>
<keyword id="KW-0963">Cytoplasm</keyword>
<keyword id="KW-0446">Lipid-binding</keyword>
<keyword id="KW-0472">Membrane</keyword>
<keyword id="KW-0597">Phosphoprotein</keyword>
<keyword id="KW-1185">Reference proteome</keyword>
<keyword id="KW-0678">Repressor</keyword>
<keyword id="KW-0694">RNA-binding</keyword>
<keyword id="KW-0727">SH2 domain</keyword>
<accession>Q9QZC5</accession>
<name>GRB7_RAT</name>
<proteinExistence type="evidence at protein level"/>
<sequence length="535" mass="59889">MELDLSPSHLSSSPEDVCPTPGTPPETPPPPDNPPPGDVKRSQPLPIPSSRKLREEEFQATSLPSIPNPFPELCSPPSQKPILGGSSGARGLLPRDSSRLCVVKVYSEDGACRSVEVAAGATARHVCEMLVQRAHALSDENWGLVECHPYLALERGLEDHESVVEVQEAWPVGGDSRFIFRKNFAKYELFKSPPHTLFPEKMVSSCLDTPTGISHEDLIQNFLNAGSFPEIQGFLQLRGSGRGSGRKLWKRFFCFLRRSGLYYSTKGTSKDPRHLQYVADINESNVYVVTQGRKLYGIPTDFGFCVKPNKLRNGHKGLHIFCSEDEQSRTCWLSAFRLFKYGVQLYKNYQQAQSRHLRLSYLGSPPLRSVSDNTLVAMDFSGHAGRVIENPQEALSAATEEAQAWRKKTNHRLSLPTPCSGLSLSAAIHRTQPWFHGRISREESQRLIGQQGLVDGVFLVRESQRNPQGFVLSLCHLQKVKHYLILPSEDEGCLYFSMDDGQTRFTDLLQLVEFHQLNRGILPCLLRHCCARVAL</sequence>
<comment type="function">
    <text evidence="1">Adapter protein that interacts with the cytoplasmic domain of numerous receptor kinases and modulates down-stream signaling. Promotes activation of down-stream protein kinases, including STAT3, AKT1, MAPK1 and/or MAPK3. Promotes activation of HRAS. Plays a role in signal transduction in response to EGF. Plays a role in the regulation of cell proliferation and cell migration. Plays a role in the assembly and stability of RNA stress granules. Binds to the 5'UTR of target mRNA molecules and represses translation of target mRNA species, when not phosphorylated. Phosphorylation impairs RNA binding and promotes stress granule disassembly during recovery after cellular stress (By similarity).</text>
</comment>
<comment type="subunit">
    <text evidence="1">Homodimer. Interacts (via SH2 domain) with EGFR, ERBB2, ERBB3 (when phosphorylated), ERBB4 (when phosphorylated), EPHB1, INSR, FGFR1, PDGFRA (tyrosine phosphorylated) and PDGFRB (tyrosine phosphorylated). Interacts with SHC1. Interacts with RND1. Interacts (when tyrosine phosphorylated) with FHL2 and HAX1 (By similarity). Interacts (via SH2 domain) with RET and PTK2/FAK1. Interacts (when not phosphorylated) with ELAVL1. In stressed cells, but not in normal cells, part of a complex that contains at least GRB7, PTK2/FAK1, STAU1, ELAVL1 and TIA1. Interacts (via SH2 domain) with KIT (phosphorylated). Interacts (via SH2 domain) with TEK/TIE2 (tyrosine phosphorylated) (By similarity).</text>
</comment>
<comment type="interaction">
    <interactant intactId="EBI-22085551">
        <id>Q9QZC5</id>
    </interactant>
    <interactant intactId="EBI-297353">
        <id>P00533</id>
        <label>EGFR</label>
    </interactant>
    <organismsDiffer>true</organismsDiffer>
    <experiments>7</experiments>
</comment>
<comment type="subcellular location">
    <subcellularLocation>
        <location evidence="3">Cytoplasm</location>
    </subcellularLocation>
    <subcellularLocation>
        <location evidence="3">Cell projection</location>
    </subcellularLocation>
    <subcellularLocation>
        <location evidence="3">Cell junction</location>
        <location evidence="3">Focal adhesion</location>
    </subcellularLocation>
    <subcellularLocation>
        <location evidence="3">Cell membrane</location>
        <topology evidence="3">Peripheral membrane protein</topology>
        <orientation evidence="3">Cytoplasmic side</orientation>
    </subcellularLocation>
    <subcellularLocation>
        <location evidence="2">Cytoplasmic granule</location>
    </subcellularLocation>
    <text evidence="2">Predominantly cytoplasmic. Detected in stress granules where mRNA is stored under stress conditions.</text>
</comment>
<comment type="tissue specificity">
    <text evidence="8">Detected in liver, kidney and placenta, and at lower levels in lung.</text>
</comment>
<comment type="domain">
    <text evidence="1">The PH domain mediates interaction with membranes containing phosphoinositides.</text>
</comment>
<comment type="PTM">
    <text evidence="1">Phosphorylated on serine and threonine residues in response to activation of receptor kinases. Phosphorylated on tyrosine residues by TEK/TIE2. Phosphorylated on tyrosine residues by PTK2/FAK1, and possibly also other kinases. Phosphorylation is enhanced by activation of receptor kinases by a cognate ligand. Tyrosine phosphorylation is essential for activation of down-stream protein kinases. Phosphorylation decreases affinity for target mRNA molecules (By similarity).</text>
</comment>
<comment type="similarity">
    <text evidence="9">Belongs to the GRB7/10/14 family.</text>
</comment>
<gene>
    <name type="primary">Grb7</name>
</gene>